<feature type="chain" id="PRO_0000282836" description="Mutual gliding-motility protein MglA">
    <location>
        <begin position="1"/>
        <end position="195"/>
    </location>
</feature>
<feature type="coiled-coil region" evidence="1">
    <location>
        <begin position="99"/>
        <end position="128"/>
    </location>
</feature>
<feature type="binding site" evidence="1">
    <location>
        <begin position="19"/>
        <end position="26"/>
    </location>
    <ligand>
        <name>GTP</name>
        <dbReference type="ChEBI" id="CHEBI:37565"/>
    </ligand>
</feature>
<feature type="binding site" evidence="1">
    <location>
        <begin position="78"/>
        <end position="82"/>
    </location>
    <ligand>
        <name>GTP</name>
        <dbReference type="ChEBI" id="CHEBI:37565"/>
    </ligand>
</feature>
<feature type="binding site" evidence="1">
    <location>
        <begin position="141"/>
        <end position="144"/>
    </location>
    <ligand>
        <name>GTP</name>
        <dbReference type="ChEBI" id="CHEBI:37565"/>
    </ligand>
</feature>
<feature type="strand" evidence="6">
    <location>
        <begin position="3"/>
        <end position="5"/>
    </location>
</feature>
<feature type="turn" evidence="6">
    <location>
        <begin position="6"/>
        <end position="9"/>
    </location>
</feature>
<feature type="strand" evidence="6">
    <location>
        <begin position="10"/>
        <end position="18"/>
    </location>
</feature>
<feature type="strand" evidence="8">
    <location>
        <begin position="20"/>
        <end position="24"/>
    </location>
</feature>
<feature type="helix" evidence="6">
    <location>
        <begin position="25"/>
        <end position="35"/>
    </location>
</feature>
<feature type="helix" evidence="6">
    <location>
        <begin position="38"/>
        <end position="40"/>
    </location>
</feature>
<feature type="strand" evidence="6">
    <location>
        <begin position="45"/>
        <end position="49"/>
    </location>
</feature>
<feature type="strand" evidence="6">
    <location>
        <begin position="52"/>
        <end position="62"/>
    </location>
</feature>
<feature type="strand" evidence="7">
    <location>
        <begin position="67"/>
        <end position="69"/>
    </location>
</feature>
<feature type="strand" evidence="6">
    <location>
        <begin position="70"/>
        <end position="78"/>
    </location>
</feature>
<feature type="helix" evidence="6">
    <location>
        <begin position="83"/>
        <end position="85"/>
    </location>
</feature>
<feature type="helix" evidence="6">
    <location>
        <begin position="86"/>
        <end position="93"/>
    </location>
</feature>
<feature type="strand" evidence="6">
    <location>
        <begin position="97"/>
        <end position="104"/>
    </location>
</feature>
<feature type="helix" evidence="6">
    <location>
        <begin position="107"/>
        <end position="109"/>
    </location>
</feature>
<feature type="helix" evidence="6">
    <location>
        <begin position="110"/>
        <end position="125"/>
    </location>
</feature>
<feature type="turn" evidence="6">
    <location>
        <begin position="126"/>
        <end position="128"/>
    </location>
</feature>
<feature type="turn" evidence="6">
    <location>
        <begin position="131"/>
        <end position="133"/>
    </location>
</feature>
<feature type="strand" evidence="6">
    <location>
        <begin position="136"/>
        <end position="141"/>
    </location>
</feature>
<feature type="helix" evidence="6">
    <location>
        <begin position="151"/>
        <end position="158"/>
    </location>
</feature>
<feature type="strand" evidence="6">
    <location>
        <begin position="165"/>
        <end position="167"/>
    </location>
</feature>
<feature type="helix" evidence="6">
    <location>
        <begin position="170"/>
        <end position="172"/>
    </location>
</feature>
<feature type="helix" evidence="6">
    <location>
        <begin position="176"/>
        <end position="193"/>
    </location>
</feature>
<name>MGLA_MYXXD</name>
<reference key="1">
    <citation type="journal article" date="1989" name="J. Bacteriol.">
        <title>Gliding motility in Myxococcus xanthus: mgl locus, RNA, and predicted protein products.</title>
        <authorList>
            <person name="Stephens K."/>
            <person name="Hartzell P.L."/>
            <person name="Kaiser D."/>
        </authorList>
    </citation>
    <scope>NUCLEOTIDE SEQUENCE [GENOMIC DNA]</scope>
</reference>
<reference key="2">
    <citation type="submission" date="2002-12" db="EMBL/GenBank/DDBJ databases">
        <title>Identification of genes required for adventurous gliding motility in Myxococcus xanthus with the transposable element mariner.</title>
        <authorList>
            <person name="Hartzell P.L."/>
            <person name="Youderian P.A."/>
        </authorList>
    </citation>
    <scope>NUCLEOTIDE SEQUENCE [GENOMIC DNA]</scope>
</reference>
<reference key="3">
    <citation type="journal article" date="2006" name="Proc. Natl. Acad. Sci. U.S.A.">
        <title>Evolution of sensory complexity recorded in a myxobacterial genome.</title>
        <authorList>
            <person name="Goldman B.S."/>
            <person name="Nierman W.C."/>
            <person name="Kaiser D."/>
            <person name="Slater S.C."/>
            <person name="Durkin A.S."/>
            <person name="Eisen J.A."/>
            <person name="Ronning C.M."/>
            <person name="Barbazuk W.B."/>
            <person name="Blanchard M."/>
            <person name="Field C."/>
            <person name="Halling C."/>
            <person name="Hinkle G."/>
            <person name="Iartchuk O."/>
            <person name="Kim H.S."/>
            <person name="Mackenzie C."/>
            <person name="Madupu R."/>
            <person name="Miller N."/>
            <person name="Shvartsbeyn A."/>
            <person name="Sullivan S.A."/>
            <person name="Vaudin M."/>
            <person name="Wiegand R."/>
            <person name="Kaplan H.B."/>
        </authorList>
    </citation>
    <scope>NUCLEOTIDE SEQUENCE [LARGE SCALE GENOMIC DNA]</scope>
    <source>
        <strain>DK1622</strain>
    </source>
</reference>
<reference key="4">
    <citation type="journal article" date="1991" name="J. Bacteriol.">
        <title>Function of MglA, a 22-kilodalton protein essential for gliding in Myxococcus xanthus.</title>
        <authorList>
            <person name="Hartzell P.L."/>
            <person name="Kaiser D."/>
        </authorList>
    </citation>
    <scope>FUNCTION</scope>
    <scope>SUBCELLULAR LOCATION</scope>
</reference>
<reference key="5">
    <citation type="journal article" date="1999" name="J. Bacteriol.">
        <title>Gliding mutants of Myxococcus xanthus with high reversal frequencies and small displacements.</title>
        <authorList>
            <person name="Spormann A.M."/>
            <person name="Kaiser D."/>
        </authorList>
    </citation>
    <scope>FUNCTION</scope>
</reference>
<reference key="6">
    <citation type="journal article" date="2002" name="Mol. Microbiol.">
        <title>MglA, a small GTPase, interacts with a tyrosine kinase to control type IV pili-mediated motility and development of Myxococcus xanthus.</title>
        <authorList>
            <person name="Thomasson B."/>
            <person name="Link J."/>
            <person name="Stassinopoulos A.G."/>
            <person name="Burke N."/>
            <person name="Plamann L."/>
            <person name="Hartzell P.L."/>
        </authorList>
    </citation>
    <scope>CHARACTERIZATION</scope>
</reference>
<reference key="7">
    <citation type="journal article" date="2004" name="J. Bacteriol.">
        <title>AglZ is a filament-forming coiled-coil protein required for adventurous gliding motility of Myxococcus xanthus.</title>
        <authorList>
            <person name="Yang R."/>
            <person name="Bartle S."/>
            <person name="Otto R."/>
            <person name="Stassinopoulos A.G."/>
            <person name="Rogers M."/>
            <person name="Plamann L."/>
            <person name="Hartzell P.L."/>
        </authorList>
    </citation>
    <scope>INTERACTION WITH AGLZ</scope>
</reference>
<protein>
    <recommendedName>
        <fullName>Mutual gliding-motility protein MglA</fullName>
    </recommendedName>
</protein>
<sequence>MSFINYSSREINCKIVYYGPGLCGKTTNLQYIYNKTAAETKGKLISLSTETDRTLFFDFLPLSLGEIRGFKTRFHLYTVPGQVFYDASRKLILKGVDGVVFVADSQIERMEANMESLENLRINLAEQGYDLNKIPYVIQYNKRDLPNAVTVEEMRKALNHRNIPEYQAVAPTGVGVFDTLKAVAKLVLTELKKGG</sequence>
<gene>
    <name type="primary">mglA</name>
    <name type="ordered locus">MXAN_1925</name>
</gene>
<keyword id="KW-0002">3D-structure</keyword>
<keyword id="KW-0175">Coiled coil</keyword>
<keyword id="KW-0963">Cytoplasm</keyword>
<keyword id="KW-0342">GTP-binding</keyword>
<keyword id="KW-0547">Nucleotide-binding</keyword>
<keyword id="KW-1185">Reference proteome</keyword>
<organism>
    <name type="scientific">Myxococcus xanthus (strain DK1622)</name>
    <dbReference type="NCBI Taxonomy" id="246197"/>
    <lineage>
        <taxon>Bacteria</taxon>
        <taxon>Pseudomonadati</taxon>
        <taxon>Myxococcota</taxon>
        <taxon>Myxococcia</taxon>
        <taxon>Myxococcales</taxon>
        <taxon>Cystobacterineae</taxon>
        <taxon>Myxococcaceae</taxon>
        <taxon>Myxococcus</taxon>
    </lineage>
</organism>
<evidence type="ECO:0000255" key="1"/>
<evidence type="ECO:0000269" key="2">
    <source>
    </source>
</evidence>
<evidence type="ECO:0000269" key="3">
    <source>
    </source>
</evidence>
<evidence type="ECO:0000269" key="4">
    <source>
    </source>
</evidence>
<evidence type="ECO:0000305" key="5"/>
<evidence type="ECO:0007829" key="6">
    <source>
        <dbReference type="PDB" id="6H17"/>
    </source>
</evidence>
<evidence type="ECO:0007829" key="7">
    <source>
        <dbReference type="PDB" id="6H5B"/>
    </source>
</evidence>
<evidence type="ECO:0007829" key="8">
    <source>
        <dbReference type="PDB" id="6HJH"/>
    </source>
</evidence>
<dbReference type="EMBL" id="AF377950">
    <property type="protein sequence ID" value="AAA25389.1"/>
    <property type="molecule type" value="Genomic_DNA"/>
</dbReference>
<dbReference type="EMBL" id="AY197569">
    <property type="protein sequence ID" value="AAO66302.1"/>
    <property type="molecule type" value="Genomic_DNA"/>
</dbReference>
<dbReference type="EMBL" id="CP000113">
    <property type="protein sequence ID" value="ABF87984.1"/>
    <property type="molecule type" value="Genomic_DNA"/>
</dbReference>
<dbReference type="PIR" id="B32048">
    <property type="entry name" value="B32048"/>
</dbReference>
<dbReference type="RefSeq" id="WP_011552025.1">
    <property type="nucleotide sequence ID" value="NC_008095.1"/>
</dbReference>
<dbReference type="PDB" id="5YMX">
    <property type="method" value="X-ray"/>
    <property type="resolution" value="1.35 A"/>
    <property type="chains" value="A/B=1-195"/>
</dbReference>
<dbReference type="PDB" id="6H17">
    <property type="method" value="X-ray"/>
    <property type="resolution" value="1.27 A"/>
    <property type="chains" value="A=1-195"/>
</dbReference>
<dbReference type="PDB" id="6H35">
    <property type="method" value="X-ray"/>
    <property type="resolution" value="2.30 A"/>
    <property type="chains" value="A/B=1-195"/>
</dbReference>
<dbReference type="PDB" id="6H5B">
    <property type="method" value="X-ray"/>
    <property type="resolution" value="2.80 A"/>
    <property type="chains" value="A=1-195"/>
</dbReference>
<dbReference type="PDB" id="6HJH">
    <property type="method" value="X-ray"/>
    <property type="resolution" value="3.30 A"/>
    <property type="chains" value="A=1-195"/>
</dbReference>
<dbReference type="PDB" id="6HJO">
    <property type="method" value="X-ray"/>
    <property type="resolution" value="1.98 A"/>
    <property type="chains" value="A/B=1-195"/>
</dbReference>
<dbReference type="PDB" id="6IZW">
    <property type="method" value="X-ray"/>
    <property type="resolution" value="2.40 A"/>
    <property type="chains" value="A=1-195"/>
</dbReference>
<dbReference type="PDBsum" id="5YMX"/>
<dbReference type="PDBsum" id="6H17"/>
<dbReference type="PDBsum" id="6H35"/>
<dbReference type="PDBsum" id="6H5B"/>
<dbReference type="PDBsum" id="6HJH"/>
<dbReference type="PDBsum" id="6HJO"/>
<dbReference type="PDBsum" id="6IZW"/>
<dbReference type="SMR" id="Q1DB04"/>
<dbReference type="IntAct" id="Q1DB04">
    <property type="interactions" value="3"/>
</dbReference>
<dbReference type="MINT" id="Q1DB04"/>
<dbReference type="STRING" id="246197.MXAN_1925"/>
<dbReference type="EnsemblBacteria" id="ABF87984">
    <property type="protein sequence ID" value="ABF87984"/>
    <property type="gene ID" value="MXAN_1925"/>
</dbReference>
<dbReference type="GeneID" id="41359339"/>
<dbReference type="KEGG" id="mxa:MXAN_1925"/>
<dbReference type="eggNOG" id="COG1100">
    <property type="taxonomic scope" value="Bacteria"/>
</dbReference>
<dbReference type="HOGENOM" id="CLU_077110_0_0_7"/>
<dbReference type="OrthoDB" id="9779858at2"/>
<dbReference type="Proteomes" id="UP000002402">
    <property type="component" value="Chromosome"/>
</dbReference>
<dbReference type="GO" id="GO:0005737">
    <property type="term" value="C:cytoplasm"/>
    <property type="evidence" value="ECO:0007669"/>
    <property type="project" value="UniProtKB-SubCell"/>
</dbReference>
<dbReference type="GO" id="GO:0005525">
    <property type="term" value="F:GTP binding"/>
    <property type="evidence" value="ECO:0007669"/>
    <property type="project" value="UniProtKB-KW"/>
</dbReference>
<dbReference type="GO" id="GO:0003924">
    <property type="term" value="F:GTPase activity"/>
    <property type="evidence" value="ECO:0007669"/>
    <property type="project" value="InterPro"/>
</dbReference>
<dbReference type="GO" id="GO:0032880">
    <property type="term" value="P:regulation of protein localization"/>
    <property type="evidence" value="ECO:0000315"/>
    <property type="project" value="CACAO"/>
</dbReference>
<dbReference type="CDD" id="cd00882">
    <property type="entry name" value="Ras_like_GTPase"/>
    <property type="match status" value="1"/>
</dbReference>
<dbReference type="FunFam" id="3.40.50.300:FF:001511">
    <property type="entry name" value="Gliding motility protein MglA"/>
    <property type="match status" value="1"/>
</dbReference>
<dbReference type="Gene3D" id="3.40.50.300">
    <property type="entry name" value="P-loop containing nucleotide triphosphate hydrolases"/>
    <property type="match status" value="1"/>
</dbReference>
<dbReference type="InterPro" id="IPR052705">
    <property type="entry name" value="Gliding_Motility_GTPase"/>
</dbReference>
<dbReference type="InterPro" id="IPR027417">
    <property type="entry name" value="P-loop_NTPase"/>
</dbReference>
<dbReference type="InterPro" id="IPR006689">
    <property type="entry name" value="Small_GTPase_ARF/SAR"/>
</dbReference>
<dbReference type="PANTHER" id="PTHR42708">
    <property type="entry name" value="ATP/GTP-BINDING PROTEIN-RELATED"/>
    <property type="match status" value="1"/>
</dbReference>
<dbReference type="PANTHER" id="PTHR42708:SF1">
    <property type="entry name" value="GLIDING MOTILITY PROTEIN MGLA"/>
    <property type="match status" value="1"/>
</dbReference>
<dbReference type="Pfam" id="PF00025">
    <property type="entry name" value="Arf"/>
    <property type="match status" value="1"/>
</dbReference>
<dbReference type="SUPFAM" id="SSF52540">
    <property type="entry name" value="P-loop containing nucleoside triphosphate hydrolases"/>
    <property type="match status" value="1"/>
</dbReference>
<proteinExistence type="evidence at protein level"/>
<comment type="function">
    <text evidence="2 4">Required for multicellular development and for both mechanisms of gliding: social (S) and adventurous (A) motility. Acts as an intracellular switch to coordinate A and S motilities. Controls the direction of gliding and gliding speed.</text>
</comment>
<comment type="subunit">
    <text evidence="3">Interacts with MasK and AglZ.</text>
</comment>
<comment type="interaction">
    <interactant intactId="EBI-7643442">
        <id>Q1DB04</id>
    </interactant>
    <interactant intactId="EBI-8019001">
        <id>Q1DB03</id>
        <label>mglB</label>
    </interactant>
    <organismsDiffer>false</organismsDiffer>
    <experiments>2</experiments>
</comment>
<comment type="subcellular location">
    <subcellularLocation>
        <location evidence="4">Cytoplasm</location>
    </subcellularLocation>
</comment>
<comment type="similarity">
    <text evidence="5">Belongs to the small GTPase superfamily. Arf family. MglA subfamily.</text>
</comment>
<accession>Q1DB04</accession>
<accession>Q50884</accession>